<proteinExistence type="inferred from homology"/>
<sequence>MYAENYKRLEQLIDKLREFNGVILVEGMRDEVALRKLGVETEIIKLSRFPLAEIALTASHYHDIMILTDFDRKGEDLAKKLTQYLEGYKCRVDTNTRRELKKIAKKDIKGIEDLYGLYLRFKSLRF</sequence>
<comment type="cofactor">
    <cofactor evidence="1">
        <name>Mg(2+)</name>
        <dbReference type="ChEBI" id="CHEBI:18420"/>
    </cofactor>
    <text evidence="1">Binds two Mg(2+) per subunit.</text>
</comment>
<comment type="similarity">
    <text evidence="1">Belongs to the UPF0292 family.</text>
</comment>
<evidence type="ECO:0000255" key="1">
    <source>
        <dbReference type="HAMAP-Rule" id="MF_01095"/>
    </source>
</evidence>
<accession>C6A1J4</accession>
<feature type="chain" id="PRO_1000213542" description="UPF0292 protein TSIB_0423">
    <location>
        <begin position="1"/>
        <end position="126"/>
    </location>
</feature>
<feature type="domain" description="Toprim" evidence="1">
    <location>
        <begin position="20"/>
        <end position="100"/>
    </location>
</feature>
<feature type="binding site" evidence="1">
    <location>
        <position position="26"/>
    </location>
    <ligand>
        <name>Mg(2+)</name>
        <dbReference type="ChEBI" id="CHEBI:18420"/>
        <label>1</label>
        <note>catalytic</note>
    </ligand>
</feature>
<feature type="binding site" evidence="1">
    <location>
        <position position="69"/>
    </location>
    <ligand>
        <name>Mg(2+)</name>
        <dbReference type="ChEBI" id="CHEBI:18420"/>
        <label>1</label>
        <note>catalytic</note>
    </ligand>
</feature>
<feature type="binding site" evidence="1">
    <location>
        <position position="69"/>
    </location>
    <ligand>
        <name>Mg(2+)</name>
        <dbReference type="ChEBI" id="CHEBI:18420"/>
        <label>2</label>
    </ligand>
</feature>
<feature type="binding site" evidence="1">
    <location>
        <position position="71"/>
    </location>
    <ligand>
        <name>Mg(2+)</name>
        <dbReference type="ChEBI" id="CHEBI:18420"/>
        <label>2</label>
    </ligand>
</feature>
<name>Y423_THESM</name>
<organism>
    <name type="scientific">Thermococcus sibiricus (strain DSM 12597 / MM 739)</name>
    <dbReference type="NCBI Taxonomy" id="604354"/>
    <lineage>
        <taxon>Archaea</taxon>
        <taxon>Methanobacteriati</taxon>
        <taxon>Methanobacteriota</taxon>
        <taxon>Thermococci</taxon>
        <taxon>Thermococcales</taxon>
        <taxon>Thermococcaceae</taxon>
        <taxon>Thermococcus</taxon>
    </lineage>
</organism>
<gene>
    <name type="ordered locus">TSIB_0423</name>
</gene>
<protein>
    <recommendedName>
        <fullName evidence="1">UPF0292 protein TSIB_0423</fullName>
    </recommendedName>
</protein>
<keyword id="KW-0460">Magnesium</keyword>
<keyword id="KW-0479">Metal-binding</keyword>
<keyword id="KW-1185">Reference proteome</keyword>
<dbReference type="EMBL" id="CP001463">
    <property type="protein sequence ID" value="ACS89489.1"/>
    <property type="molecule type" value="Genomic_DNA"/>
</dbReference>
<dbReference type="SMR" id="C6A1J4"/>
<dbReference type="STRING" id="604354.TSIB_0423"/>
<dbReference type="KEGG" id="tsi:TSIB_0423"/>
<dbReference type="eggNOG" id="arCOG01486">
    <property type="taxonomic scope" value="Archaea"/>
</dbReference>
<dbReference type="HOGENOM" id="CLU_140789_3_0_2"/>
<dbReference type="OrthoDB" id="56459at2157"/>
<dbReference type="Proteomes" id="UP000009079">
    <property type="component" value="Chromosome"/>
</dbReference>
<dbReference type="GO" id="GO:0046872">
    <property type="term" value="F:metal ion binding"/>
    <property type="evidence" value="ECO:0007669"/>
    <property type="project" value="UniProtKB-KW"/>
</dbReference>
<dbReference type="CDD" id="cd01027">
    <property type="entry name" value="TOPRIM_RNase_M5_like"/>
    <property type="match status" value="1"/>
</dbReference>
<dbReference type="Gene3D" id="3.40.1360.10">
    <property type="match status" value="1"/>
</dbReference>
<dbReference type="HAMAP" id="MF_01095">
    <property type="entry name" value="UPF0292"/>
    <property type="match status" value="1"/>
</dbReference>
<dbReference type="InterPro" id="IPR006171">
    <property type="entry name" value="TOPRIM_dom"/>
</dbReference>
<dbReference type="InterPro" id="IPR034141">
    <property type="entry name" value="TOPRIM_RNase_M5-like"/>
</dbReference>
<dbReference type="InterPro" id="IPR022972">
    <property type="entry name" value="UPF0292"/>
</dbReference>
<dbReference type="NCBIfam" id="NF003090">
    <property type="entry name" value="PRK04017.1-1"/>
    <property type="match status" value="1"/>
</dbReference>
<dbReference type="PANTHER" id="PTHR39964:SF2">
    <property type="entry name" value="UPF0292 PROTEIN MJ1624"/>
    <property type="match status" value="1"/>
</dbReference>
<dbReference type="PANTHER" id="PTHR39964">
    <property type="entry name" value="UPF0292 PROTEIN TK1411"/>
    <property type="match status" value="1"/>
</dbReference>
<dbReference type="Pfam" id="PF01751">
    <property type="entry name" value="Toprim"/>
    <property type="match status" value="1"/>
</dbReference>
<dbReference type="SMART" id="SM00493">
    <property type="entry name" value="TOPRIM"/>
    <property type="match status" value="1"/>
</dbReference>
<dbReference type="SUPFAM" id="SSF110455">
    <property type="entry name" value="Toprim domain"/>
    <property type="match status" value="1"/>
</dbReference>
<dbReference type="PROSITE" id="PS50880">
    <property type="entry name" value="TOPRIM"/>
    <property type="match status" value="1"/>
</dbReference>
<reference key="1">
    <citation type="journal article" date="2009" name="Appl. Environ. Microbiol.">
        <title>Metabolic versatility and indigenous origin of the archaeon Thermococcus sibiricus, isolated from a siberian oil reservoir, as revealed by genome analysis.</title>
        <authorList>
            <person name="Mardanov A.V."/>
            <person name="Ravin N.V."/>
            <person name="Svetlitchnyi V.A."/>
            <person name="Beletsky A.V."/>
            <person name="Miroshnichenko M.L."/>
            <person name="Bonch-Osmolovskaya E.A."/>
            <person name="Skryabin K.G."/>
        </authorList>
    </citation>
    <scope>NUCLEOTIDE SEQUENCE [LARGE SCALE GENOMIC DNA]</scope>
    <source>
        <strain>DSM 12597 / MM 739</strain>
    </source>
</reference>